<feature type="chain" id="PRO_0000386158" description="GTPase Obg">
    <location>
        <begin position="1"/>
        <end position="408"/>
    </location>
</feature>
<feature type="domain" description="Obg" evidence="2">
    <location>
        <begin position="1"/>
        <end position="159"/>
    </location>
</feature>
<feature type="domain" description="OBG-type G" evidence="1">
    <location>
        <begin position="160"/>
        <end position="333"/>
    </location>
</feature>
<feature type="region of interest" description="Disordered" evidence="3">
    <location>
        <begin position="127"/>
        <end position="148"/>
    </location>
</feature>
<feature type="region of interest" description="Disordered" evidence="3">
    <location>
        <begin position="385"/>
        <end position="408"/>
    </location>
</feature>
<feature type="compositionally biased region" description="Polar residues" evidence="3">
    <location>
        <begin position="129"/>
        <end position="143"/>
    </location>
</feature>
<feature type="compositionally biased region" description="Acidic residues" evidence="3">
    <location>
        <begin position="385"/>
        <end position="401"/>
    </location>
</feature>
<feature type="binding site" evidence="1">
    <location>
        <begin position="166"/>
        <end position="173"/>
    </location>
    <ligand>
        <name>GTP</name>
        <dbReference type="ChEBI" id="CHEBI:37565"/>
    </ligand>
</feature>
<feature type="binding site" evidence="1">
    <location>
        <position position="173"/>
    </location>
    <ligand>
        <name>Mg(2+)</name>
        <dbReference type="ChEBI" id="CHEBI:18420"/>
    </ligand>
</feature>
<feature type="binding site" evidence="1">
    <location>
        <begin position="191"/>
        <end position="195"/>
    </location>
    <ligand>
        <name>GTP</name>
        <dbReference type="ChEBI" id="CHEBI:37565"/>
    </ligand>
</feature>
<feature type="binding site" evidence="1">
    <location>
        <position position="193"/>
    </location>
    <ligand>
        <name>Mg(2+)</name>
        <dbReference type="ChEBI" id="CHEBI:18420"/>
    </ligand>
</feature>
<feature type="binding site" evidence="1">
    <location>
        <begin position="213"/>
        <end position="216"/>
    </location>
    <ligand>
        <name>GTP</name>
        <dbReference type="ChEBI" id="CHEBI:37565"/>
    </ligand>
</feature>
<feature type="binding site" evidence="1">
    <location>
        <begin position="283"/>
        <end position="286"/>
    </location>
    <ligand>
        <name>GTP</name>
        <dbReference type="ChEBI" id="CHEBI:37565"/>
    </ligand>
</feature>
<feature type="binding site" evidence="1">
    <location>
        <begin position="314"/>
        <end position="316"/>
    </location>
    <ligand>
        <name>GTP</name>
        <dbReference type="ChEBI" id="CHEBI:37565"/>
    </ligand>
</feature>
<organism>
    <name type="scientific">Pseudomonas putida (strain ATCC 700007 / DSM 6899 / JCM 31910 / BCRC 17059 / LMG 24140 / F1)</name>
    <dbReference type="NCBI Taxonomy" id="351746"/>
    <lineage>
        <taxon>Bacteria</taxon>
        <taxon>Pseudomonadati</taxon>
        <taxon>Pseudomonadota</taxon>
        <taxon>Gammaproteobacteria</taxon>
        <taxon>Pseudomonadales</taxon>
        <taxon>Pseudomonadaceae</taxon>
        <taxon>Pseudomonas</taxon>
    </lineage>
</organism>
<evidence type="ECO:0000255" key="1">
    <source>
        <dbReference type="HAMAP-Rule" id="MF_01454"/>
    </source>
</evidence>
<evidence type="ECO:0000255" key="2">
    <source>
        <dbReference type="PROSITE-ProRule" id="PRU01231"/>
    </source>
</evidence>
<evidence type="ECO:0000256" key="3">
    <source>
        <dbReference type="SAM" id="MobiDB-lite"/>
    </source>
</evidence>
<protein>
    <recommendedName>
        <fullName evidence="1">GTPase Obg</fullName>
        <ecNumber evidence="1">3.6.5.-</ecNumber>
    </recommendedName>
    <alternativeName>
        <fullName evidence="1">GTP-binding protein Obg</fullName>
    </alternativeName>
</protein>
<gene>
    <name evidence="1" type="primary">obg</name>
    <name type="ordered locus">Pput_0722</name>
</gene>
<reference key="1">
    <citation type="submission" date="2007-05" db="EMBL/GenBank/DDBJ databases">
        <title>Complete sequence of Pseudomonas putida F1.</title>
        <authorList>
            <consortium name="US DOE Joint Genome Institute"/>
            <person name="Copeland A."/>
            <person name="Lucas S."/>
            <person name="Lapidus A."/>
            <person name="Barry K."/>
            <person name="Detter J.C."/>
            <person name="Glavina del Rio T."/>
            <person name="Hammon N."/>
            <person name="Israni S."/>
            <person name="Dalin E."/>
            <person name="Tice H."/>
            <person name="Pitluck S."/>
            <person name="Chain P."/>
            <person name="Malfatti S."/>
            <person name="Shin M."/>
            <person name="Vergez L."/>
            <person name="Schmutz J."/>
            <person name="Larimer F."/>
            <person name="Land M."/>
            <person name="Hauser L."/>
            <person name="Kyrpides N."/>
            <person name="Lykidis A."/>
            <person name="Parales R."/>
            <person name="Richardson P."/>
        </authorList>
    </citation>
    <scope>NUCLEOTIDE SEQUENCE [LARGE SCALE GENOMIC DNA]</scope>
    <source>
        <strain>ATCC 700007 / DSM 6899 / JCM 31910 / BCRC 17059 / LMG 24140 / F1</strain>
    </source>
</reference>
<name>OBG_PSEP1</name>
<dbReference type="EC" id="3.6.5.-" evidence="1"/>
<dbReference type="EMBL" id="CP000712">
    <property type="protein sequence ID" value="ABQ76886.1"/>
    <property type="molecule type" value="Genomic_DNA"/>
</dbReference>
<dbReference type="SMR" id="A5VYC6"/>
<dbReference type="KEGG" id="ppf:Pput_0722"/>
<dbReference type="eggNOG" id="COG0536">
    <property type="taxonomic scope" value="Bacteria"/>
</dbReference>
<dbReference type="HOGENOM" id="CLU_011747_2_0_6"/>
<dbReference type="GO" id="GO:0005737">
    <property type="term" value="C:cytoplasm"/>
    <property type="evidence" value="ECO:0007669"/>
    <property type="project" value="UniProtKB-SubCell"/>
</dbReference>
<dbReference type="GO" id="GO:0005525">
    <property type="term" value="F:GTP binding"/>
    <property type="evidence" value="ECO:0007669"/>
    <property type="project" value="UniProtKB-UniRule"/>
</dbReference>
<dbReference type="GO" id="GO:0003924">
    <property type="term" value="F:GTPase activity"/>
    <property type="evidence" value="ECO:0007669"/>
    <property type="project" value="UniProtKB-UniRule"/>
</dbReference>
<dbReference type="GO" id="GO:0000287">
    <property type="term" value="F:magnesium ion binding"/>
    <property type="evidence" value="ECO:0007669"/>
    <property type="project" value="InterPro"/>
</dbReference>
<dbReference type="GO" id="GO:0042254">
    <property type="term" value="P:ribosome biogenesis"/>
    <property type="evidence" value="ECO:0007669"/>
    <property type="project" value="UniProtKB-UniRule"/>
</dbReference>
<dbReference type="CDD" id="cd01898">
    <property type="entry name" value="Obg"/>
    <property type="match status" value="1"/>
</dbReference>
<dbReference type="FunFam" id="2.70.210.12:FF:000001">
    <property type="entry name" value="GTPase Obg"/>
    <property type="match status" value="1"/>
</dbReference>
<dbReference type="FunFam" id="3.40.50.300:FF:000185">
    <property type="entry name" value="GTPase Obg"/>
    <property type="match status" value="1"/>
</dbReference>
<dbReference type="Gene3D" id="2.70.210.12">
    <property type="entry name" value="GTP1/OBG domain"/>
    <property type="match status" value="1"/>
</dbReference>
<dbReference type="Gene3D" id="3.40.50.300">
    <property type="entry name" value="P-loop containing nucleotide triphosphate hydrolases"/>
    <property type="match status" value="1"/>
</dbReference>
<dbReference type="HAMAP" id="MF_01454">
    <property type="entry name" value="GTPase_Obg"/>
    <property type="match status" value="1"/>
</dbReference>
<dbReference type="InterPro" id="IPR031167">
    <property type="entry name" value="G_OBG"/>
</dbReference>
<dbReference type="InterPro" id="IPR006073">
    <property type="entry name" value="GTP-bd"/>
</dbReference>
<dbReference type="InterPro" id="IPR014100">
    <property type="entry name" value="GTP-bd_Obg/CgtA"/>
</dbReference>
<dbReference type="InterPro" id="IPR006074">
    <property type="entry name" value="GTP1-OBG_CS"/>
</dbReference>
<dbReference type="InterPro" id="IPR006169">
    <property type="entry name" value="GTP1_OBG_dom"/>
</dbReference>
<dbReference type="InterPro" id="IPR036726">
    <property type="entry name" value="GTP1_OBG_dom_sf"/>
</dbReference>
<dbReference type="InterPro" id="IPR045086">
    <property type="entry name" value="OBG_GTPase"/>
</dbReference>
<dbReference type="InterPro" id="IPR027417">
    <property type="entry name" value="P-loop_NTPase"/>
</dbReference>
<dbReference type="NCBIfam" id="TIGR02729">
    <property type="entry name" value="Obg_CgtA"/>
    <property type="match status" value="1"/>
</dbReference>
<dbReference type="NCBIfam" id="NF008955">
    <property type="entry name" value="PRK12297.1"/>
    <property type="match status" value="1"/>
</dbReference>
<dbReference type="NCBIfam" id="NF008956">
    <property type="entry name" value="PRK12299.1"/>
    <property type="match status" value="1"/>
</dbReference>
<dbReference type="PANTHER" id="PTHR11702">
    <property type="entry name" value="DEVELOPMENTALLY REGULATED GTP-BINDING PROTEIN-RELATED"/>
    <property type="match status" value="1"/>
</dbReference>
<dbReference type="PANTHER" id="PTHR11702:SF31">
    <property type="entry name" value="MITOCHONDRIAL RIBOSOME-ASSOCIATED GTPASE 2"/>
    <property type="match status" value="1"/>
</dbReference>
<dbReference type="Pfam" id="PF01018">
    <property type="entry name" value="GTP1_OBG"/>
    <property type="match status" value="1"/>
</dbReference>
<dbReference type="Pfam" id="PF01926">
    <property type="entry name" value="MMR_HSR1"/>
    <property type="match status" value="1"/>
</dbReference>
<dbReference type="PIRSF" id="PIRSF002401">
    <property type="entry name" value="GTP_bd_Obg/CgtA"/>
    <property type="match status" value="1"/>
</dbReference>
<dbReference type="PRINTS" id="PR00326">
    <property type="entry name" value="GTP1OBG"/>
</dbReference>
<dbReference type="SUPFAM" id="SSF82051">
    <property type="entry name" value="Obg GTP-binding protein N-terminal domain"/>
    <property type="match status" value="1"/>
</dbReference>
<dbReference type="SUPFAM" id="SSF52540">
    <property type="entry name" value="P-loop containing nucleoside triphosphate hydrolases"/>
    <property type="match status" value="1"/>
</dbReference>
<dbReference type="PROSITE" id="PS51710">
    <property type="entry name" value="G_OBG"/>
    <property type="match status" value="1"/>
</dbReference>
<dbReference type="PROSITE" id="PS00905">
    <property type="entry name" value="GTP1_OBG"/>
    <property type="match status" value="1"/>
</dbReference>
<dbReference type="PROSITE" id="PS51883">
    <property type="entry name" value="OBG"/>
    <property type="match status" value="1"/>
</dbReference>
<sequence length="408" mass="44825">MKFVDEVSIRVKAGDGGNGCMSFRREKFIENGGPNGGDGGDGGSVYMIADENLNTLVDYRYTRHHEAQRGSNGGSTDCTGKKGEDLFLRVPVGTTVIDASTQEVIGDLVTPGQKLMVAQGGWHGLGNTRFKSSTNRAPRQTTPGKPGEQRDLKMEMKVLADVGLLGLPNAGKSTFIRSVSAAKPKVADYPFTTLVPNLGVVSVDRWKSFVIADIPGLIEGASEGAGLGIRFLKHLARTRVLLHLVDIAPLDESSPADAAEVIVNELTRFSPSLAERERWLVLNKADMVMDDERDERVQEVIDRLEWEGPVYVISAISKQGTDKLSHDLMRYLEDRADRLANDPAYAEELADLDQRIEDEARAQLQALDDARTLRRTGVKSVHDIGDDDGWDDDFEDDEDGPEIIYVRD</sequence>
<accession>A5VYC6</accession>
<keyword id="KW-0963">Cytoplasm</keyword>
<keyword id="KW-0342">GTP-binding</keyword>
<keyword id="KW-0378">Hydrolase</keyword>
<keyword id="KW-0460">Magnesium</keyword>
<keyword id="KW-0479">Metal-binding</keyword>
<keyword id="KW-0547">Nucleotide-binding</keyword>
<proteinExistence type="inferred from homology"/>
<comment type="function">
    <text evidence="1">An essential GTPase which binds GTP, GDP and possibly (p)ppGpp with moderate affinity, with high nucleotide exchange rates and a fairly low GTP hydrolysis rate. Plays a role in control of the cell cycle, stress response, ribosome biogenesis and in those bacteria that undergo differentiation, in morphogenesis control.</text>
</comment>
<comment type="cofactor">
    <cofactor evidence="1">
        <name>Mg(2+)</name>
        <dbReference type="ChEBI" id="CHEBI:18420"/>
    </cofactor>
</comment>
<comment type="subunit">
    <text evidence="1">Monomer.</text>
</comment>
<comment type="subcellular location">
    <subcellularLocation>
        <location evidence="1">Cytoplasm</location>
    </subcellularLocation>
</comment>
<comment type="similarity">
    <text evidence="1">Belongs to the TRAFAC class OBG-HflX-like GTPase superfamily. OBG GTPase family.</text>
</comment>